<organism>
    <name type="scientific">Bacteroides fragilis (strain ATCC 25285 / DSM 2151 / CCUG 4856 / JCM 11019 / LMG 10263 / NCTC 9343 / Onslow / VPI 2553 / EN-2)</name>
    <dbReference type="NCBI Taxonomy" id="272559"/>
    <lineage>
        <taxon>Bacteria</taxon>
        <taxon>Pseudomonadati</taxon>
        <taxon>Bacteroidota</taxon>
        <taxon>Bacteroidia</taxon>
        <taxon>Bacteroidales</taxon>
        <taxon>Bacteroidaceae</taxon>
        <taxon>Bacteroides</taxon>
    </lineage>
</organism>
<feature type="chain" id="PRO_0000331781" description="Methionine--tRNA ligase">
    <location>
        <begin position="1"/>
        <end position="679"/>
    </location>
</feature>
<feature type="domain" description="tRNA-binding" evidence="1">
    <location>
        <begin position="578"/>
        <end position="679"/>
    </location>
</feature>
<feature type="short sequence motif" description="'HIGH' region">
    <location>
        <begin position="15"/>
        <end position="25"/>
    </location>
</feature>
<feature type="short sequence motif" description="'KMSKS' region">
    <location>
        <begin position="332"/>
        <end position="336"/>
    </location>
</feature>
<feature type="binding site" evidence="1">
    <location>
        <position position="147"/>
    </location>
    <ligand>
        <name>Zn(2+)</name>
        <dbReference type="ChEBI" id="CHEBI:29105"/>
    </ligand>
</feature>
<feature type="binding site" evidence="1">
    <location>
        <position position="150"/>
    </location>
    <ligand>
        <name>Zn(2+)</name>
        <dbReference type="ChEBI" id="CHEBI:29105"/>
    </ligand>
</feature>
<feature type="binding site" evidence="1">
    <location>
        <position position="160"/>
    </location>
    <ligand>
        <name>Zn(2+)</name>
        <dbReference type="ChEBI" id="CHEBI:29105"/>
    </ligand>
</feature>
<feature type="binding site" evidence="1">
    <location>
        <position position="163"/>
    </location>
    <ligand>
        <name>Zn(2+)</name>
        <dbReference type="ChEBI" id="CHEBI:29105"/>
    </ligand>
</feature>
<feature type="binding site" evidence="1">
    <location>
        <position position="335"/>
    </location>
    <ligand>
        <name>ATP</name>
        <dbReference type="ChEBI" id="CHEBI:30616"/>
    </ligand>
</feature>
<reference key="1">
    <citation type="journal article" date="2005" name="Science">
        <title>Extensive DNA inversions in the B. fragilis genome control variable gene expression.</title>
        <authorList>
            <person name="Cerdeno-Tarraga A.-M."/>
            <person name="Patrick S."/>
            <person name="Crossman L.C."/>
            <person name="Blakely G."/>
            <person name="Abratt V."/>
            <person name="Lennard N."/>
            <person name="Poxton I."/>
            <person name="Duerden B."/>
            <person name="Harris B."/>
            <person name="Quail M.A."/>
            <person name="Barron A."/>
            <person name="Clark L."/>
            <person name="Corton C."/>
            <person name="Doggett J."/>
            <person name="Holden M.T.G."/>
            <person name="Larke N."/>
            <person name="Line A."/>
            <person name="Lord A."/>
            <person name="Norbertczak H."/>
            <person name="Ormond D."/>
            <person name="Price C."/>
            <person name="Rabbinowitsch E."/>
            <person name="Woodward J."/>
            <person name="Barrell B.G."/>
            <person name="Parkhill J."/>
        </authorList>
    </citation>
    <scope>NUCLEOTIDE SEQUENCE [LARGE SCALE GENOMIC DNA]</scope>
    <source>
        <strain>ATCC 25285 / DSM 2151 / CCUG 4856 / JCM 11019 / LMG 10263 / NCTC 9343 / Onslow / VPI 2553 / EN-2</strain>
    </source>
</reference>
<comment type="function">
    <text evidence="1">Is required not only for elongation of protein synthesis but also for the initiation of all mRNA translation through initiator tRNA(fMet) aminoacylation.</text>
</comment>
<comment type="catalytic activity">
    <reaction evidence="1">
        <text>tRNA(Met) + L-methionine + ATP = L-methionyl-tRNA(Met) + AMP + diphosphate</text>
        <dbReference type="Rhea" id="RHEA:13481"/>
        <dbReference type="Rhea" id="RHEA-COMP:9667"/>
        <dbReference type="Rhea" id="RHEA-COMP:9698"/>
        <dbReference type="ChEBI" id="CHEBI:30616"/>
        <dbReference type="ChEBI" id="CHEBI:33019"/>
        <dbReference type="ChEBI" id="CHEBI:57844"/>
        <dbReference type="ChEBI" id="CHEBI:78442"/>
        <dbReference type="ChEBI" id="CHEBI:78530"/>
        <dbReference type="ChEBI" id="CHEBI:456215"/>
        <dbReference type="EC" id="6.1.1.10"/>
    </reaction>
</comment>
<comment type="cofactor">
    <cofactor evidence="1">
        <name>Zn(2+)</name>
        <dbReference type="ChEBI" id="CHEBI:29105"/>
    </cofactor>
    <text evidence="1">Binds 1 zinc ion per subunit.</text>
</comment>
<comment type="subunit">
    <text evidence="1">Homodimer.</text>
</comment>
<comment type="subcellular location">
    <subcellularLocation>
        <location evidence="1">Cytoplasm</location>
    </subcellularLocation>
</comment>
<comment type="similarity">
    <text evidence="1">Belongs to the class-I aminoacyl-tRNA synthetase family. MetG type 1 subfamily.</text>
</comment>
<evidence type="ECO:0000255" key="1">
    <source>
        <dbReference type="HAMAP-Rule" id="MF_00098"/>
    </source>
</evidence>
<accession>Q5L7I8</accession>
<sequence length="679" mass="77608">MEKNFKRTTVTSALPYANGPVHIGHLAGVYVPADIYVRYLRLKKEDVLFIGGSDEHGVPITIRAKKEGITPQDVVDRYHFLIKKSFEEFGISFDVYSRTSSKTHHELASDFFKKLYEKGEFIEKTSEQYYDEEAHQFLADRYITGECPHCHSEGAYGDQCEKCGTSLSPTDLINPKSAISGSKPVMKETKHWYLPLDKHETWLRQWILEEHKEWRPNVYGQCKSWLDMGLQPRAVSRDLDWGIPVPVEGAEGKVLYVWFDAPIGYISNTKELLPDSWETWWKDPETRLVHFIGKDNIVFHCIVFPAMLKAEGSYILPDNVPSNEFLNLEGDKISTSRNWAVWLHEYLEDFPGKQDVLRYVLTANAPETKDNDFTWKDFQARNNNELVAVYGNFVNRAMVLTQKYFEGKVPAAGELIDYDKETLKEFSDVKAEVEKLLNVFKFRDAQKEAMNLARIGNKYLADTEPWKLAKTDMERVGTILNISLQLVANLAIAFEPFLPFSSERLRQMLNMDSFDWAELGRNDLLPAGHQLNKPELLFEKIEDATIEAQVQKLLDTKKANEEANYKAKPIRANIEFDDFMKLDIRVGTVLECQKVPKADKLLQFKIDDGLETRTIVSGIAQHYKPEELVGKQVCFIANLAPRKLKGIVSEGMILSAENNDGSLAVVMPGREVKPGSEVK</sequence>
<gene>
    <name evidence="1" type="primary">metG</name>
    <name type="ordered locus">BF4297</name>
</gene>
<protein>
    <recommendedName>
        <fullName evidence="1">Methionine--tRNA ligase</fullName>
        <ecNumber evidence="1">6.1.1.10</ecNumber>
    </recommendedName>
    <alternativeName>
        <fullName evidence="1">Methionyl-tRNA synthetase</fullName>
        <shortName evidence="1">MetRS</shortName>
    </alternativeName>
</protein>
<name>SYM_BACFN</name>
<dbReference type="EC" id="6.1.1.10" evidence="1"/>
<dbReference type="EMBL" id="CR626927">
    <property type="protein sequence ID" value="CAH09964.1"/>
    <property type="molecule type" value="Genomic_DNA"/>
</dbReference>
<dbReference type="RefSeq" id="WP_010993799.1">
    <property type="nucleotide sequence ID" value="NC_003228.3"/>
</dbReference>
<dbReference type="SMR" id="Q5L7I8"/>
<dbReference type="PaxDb" id="272559-BF9343_4183"/>
<dbReference type="GeneID" id="60368295"/>
<dbReference type="KEGG" id="bfs:BF9343_4183"/>
<dbReference type="eggNOG" id="COG0073">
    <property type="taxonomic scope" value="Bacteria"/>
</dbReference>
<dbReference type="eggNOG" id="COG0143">
    <property type="taxonomic scope" value="Bacteria"/>
</dbReference>
<dbReference type="HOGENOM" id="CLU_009710_1_2_10"/>
<dbReference type="Proteomes" id="UP000006731">
    <property type="component" value="Chromosome"/>
</dbReference>
<dbReference type="GO" id="GO:0005829">
    <property type="term" value="C:cytosol"/>
    <property type="evidence" value="ECO:0007669"/>
    <property type="project" value="TreeGrafter"/>
</dbReference>
<dbReference type="GO" id="GO:0005524">
    <property type="term" value="F:ATP binding"/>
    <property type="evidence" value="ECO:0007669"/>
    <property type="project" value="UniProtKB-UniRule"/>
</dbReference>
<dbReference type="GO" id="GO:0046872">
    <property type="term" value="F:metal ion binding"/>
    <property type="evidence" value="ECO:0007669"/>
    <property type="project" value="UniProtKB-KW"/>
</dbReference>
<dbReference type="GO" id="GO:0004825">
    <property type="term" value="F:methionine-tRNA ligase activity"/>
    <property type="evidence" value="ECO:0007669"/>
    <property type="project" value="UniProtKB-UniRule"/>
</dbReference>
<dbReference type="GO" id="GO:0000049">
    <property type="term" value="F:tRNA binding"/>
    <property type="evidence" value="ECO:0007669"/>
    <property type="project" value="UniProtKB-KW"/>
</dbReference>
<dbReference type="GO" id="GO:0006431">
    <property type="term" value="P:methionyl-tRNA aminoacylation"/>
    <property type="evidence" value="ECO:0007669"/>
    <property type="project" value="UniProtKB-UniRule"/>
</dbReference>
<dbReference type="CDD" id="cd07957">
    <property type="entry name" value="Anticodon_Ia_Met"/>
    <property type="match status" value="1"/>
</dbReference>
<dbReference type="CDD" id="cd00814">
    <property type="entry name" value="MetRS_core"/>
    <property type="match status" value="1"/>
</dbReference>
<dbReference type="CDD" id="cd02800">
    <property type="entry name" value="tRNA_bind_EcMetRS_like"/>
    <property type="match status" value="1"/>
</dbReference>
<dbReference type="FunFam" id="1.10.730.10:FF:000030">
    <property type="entry name" value="Methionine--tRNA ligase"/>
    <property type="match status" value="1"/>
</dbReference>
<dbReference type="FunFam" id="2.20.28.20:FF:000001">
    <property type="entry name" value="Methionine--tRNA ligase"/>
    <property type="match status" value="1"/>
</dbReference>
<dbReference type="FunFam" id="2.40.50.140:FF:000042">
    <property type="entry name" value="Methionine--tRNA ligase"/>
    <property type="match status" value="1"/>
</dbReference>
<dbReference type="Gene3D" id="3.40.50.620">
    <property type="entry name" value="HUPs"/>
    <property type="match status" value="1"/>
</dbReference>
<dbReference type="Gene3D" id="1.10.730.10">
    <property type="entry name" value="Isoleucyl-tRNA Synthetase, Domain 1"/>
    <property type="match status" value="1"/>
</dbReference>
<dbReference type="Gene3D" id="2.20.28.20">
    <property type="entry name" value="Methionyl-tRNA synthetase, Zn-domain"/>
    <property type="match status" value="1"/>
</dbReference>
<dbReference type="Gene3D" id="2.40.50.140">
    <property type="entry name" value="Nucleic acid-binding proteins"/>
    <property type="match status" value="1"/>
</dbReference>
<dbReference type="HAMAP" id="MF_00098">
    <property type="entry name" value="Met_tRNA_synth_type1"/>
    <property type="match status" value="1"/>
</dbReference>
<dbReference type="InterPro" id="IPR001412">
    <property type="entry name" value="aa-tRNA-synth_I_CS"/>
</dbReference>
<dbReference type="InterPro" id="IPR041872">
    <property type="entry name" value="Anticodon_Met"/>
</dbReference>
<dbReference type="InterPro" id="IPR004495">
    <property type="entry name" value="Met-tRNA-synth_bsu_C"/>
</dbReference>
<dbReference type="InterPro" id="IPR023458">
    <property type="entry name" value="Met-tRNA_ligase_1"/>
</dbReference>
<dbReference type="InterPro" id="IPR014758">
    <property type="entry name" value="Met-tRNA_synth"/>
</dbReference>
<dbReference type="InterPro" id="IPR015413">
    <property type="entry name" value="Methionyl/Leucyl_tRNA_Synth"/>
</dbReference>
<dbReference type="InterPro" id="IPR033911">
    <property type="entry name" value="MetRS_core"/>
</dbReference>
<dbReference type="InterPro" id="IPR029038">
    <property type="entry name" value="MetRS_Zn"/>
</dbReference>
<dbReference type="InterPro" id="IPR012340">
    <property type="entry name" value="NA-bd_OB-fold"/>
</dbReference>
<dbReference type="InterPro" id="IPR014729">
    <property type="entry name" value="Rossmann-like_a/b/a_fold"/>
</dbReference>
<dbReference type="InterPro" id="IPR002547">
    <property type="entry name" value="tRNA-bd_dom"/>
</dbReference>
<dbReference type="InterPro" id="IPR009080">
    <property type="entry name" value="tRNAsynth_Ia_anticodon-bd"/>
</dbReference>
<dbReference type="NCBIfam" id="TIGR00398">
    <property type="entry name" value="metG"/>
    <property type="match status" value="1"/>
</dbReference>
<dbReference type="NCBIfam" id="TIGR00399">
    <property type="entry name" value="metG_C_term"/>
    <property type="match status" value="1"/>
</dbReference>
<dbReference type="NCBIfam" id="NF001100">
    <property type="entry name" value="PRK00133.1"/>
    <property type="match status" value="1"/>
</dbReference>
<dbReference type="PANTHER" id="PTHR45765">
    <property type="entry name" value="METHIONINE--TRNA LIGASE"/>
    <property type="match status" value="1"/>
</dbReference>
<dbReference type="PANTHER" id="PTHR45765:SF1">
    <property type="entry name" value="METHIONINE--TRNA LIGASE, CYTOPLASMIC"/>
    <property type="match status" value="1"/>
</dbReference>
<dbReference type="Pfam" id="PF19303">
    <property type="entry name" value="Anticodon_3"/>
    <property type="match status" value="1"/>
</dbReference>
<dbReference type="Pfam" id="PF09334">
    <property type="entry name" value="tRNA-synt_1g"/>
    <property type="match status" value="1"/>
</dbReference>
<dbReference type="Pfam" id="PF01588">
    <property type="entry name" value="tRNA_bind"/>
    <property type="match status" value="1"/>
</dbReference>
<dbReference type="PRINTS" id="PR01041">
    <property type="entry name" value="TRNASYNTHMET"/>
</dbReference>
<dbReference type="SUPFAM" id="SSF47323">
    <property type="entry name" value="Anticodon-binding domain of a subclass of class I aminoacyl-tRNA synthetases"/>
    <property type="match status" value="1"/>
</dbReference>
<dbReference type="SUPFAM" id="SSF57770">
    <property type="entry name" value="Methionyl-tRNA synthetase (MetRS), Zn-domain"/>
    <property type="match status" value="1"/>
</dbReference>
<dbReference type="SUPFAM" id="SSF50249">
    <property type="entry name" value="Nucleic acid-binding proteins"/>
    <property type="match status" value="1"/>
</dbReference>
<dbReference type="SUPFAM" id="SSF52374">
    <property type="entry name" value="Nucleotidylyl transferase"/>
    <property type="match status" value="1"/>
</dbReference>
<dbReference type="PROSITE" id="PS00178">
    <property type="entry name" value="AA_TRNA_LIGASE_I"/>
    <property type="match status" value="1"/>
</dbReference>
<dbReference type="PROSITE" id="PS50886">
    <property type="entry name" value="TRBD"/>
    <property type="match status" value="1"/>
</dbReference>
<keyword id="KW-0030">Aminoacyl-tRNA synthetase</keyword>
<keyword id="KW-0067">ATP-binding</keyword>
<keyword id="KW-0963">Cytoplasm</keyword>
<keyword id="KW-0436">Ligase</keyword>
<keyword id="KW-0479">Metal-binding</keyword>
<keyword id="KW-0547">Nucleotide-binding</keyword>
<keyword id="KW-0648">Protein biosynthesis</keyword>
<keyword id="KW-0694">RNA-binding</keyword>
<keyword id="KW-0820">tRNA-binding</keyword>
<keyword id="KW-0862">Zinc</keyword>
<proteinExistence type="inferred from homology"/>